<evidence type="ECO:0000250" key="1"/>
<evidence type="ECO:0000250" key="2">
    <source>
        <dbReference type="UniProtKB" id="A1Z6W3"/>
    </source>
</evidence>
<evidence type="ECO:0000255" key="3">
    <source>
        <dbReference type="PROSITE-ProRule" id="PRU00125"/>
    </source>
</evidence>
<evidence type="ECO:0000255" key="4">
    <source>
        <dbReference type="PROSITE-ProRule" id="PRU00636"/>
    </source>
</evidence>
<evidence type="ECO:0000256" key="5">
    <source>
        <dbReference type="SAM" id="MobiDB-lite"/>
    </source>
</evidence>
<evidence type="ECO:0000305" key="6"/>
<reference key="1">
    <citation type="journal article" date="2002" name="Science">
        <title>The genome sequence of the malaria mosquito Anopheles gambiae.</title>
        <authorList>
            <person name="Holt R.A."/>
            <person name="Subramanian G.M."/>
            <person name="Halpern A."/>
            <person name="Sutton G.G."/>
            <person name="Charlab R."/>
            <person name="Nusskern D.R."/>
            <person name="Wincker P."/>
            <person name="Clark A.G."/>
            <person name="Ribeiro J.M.C."/>
            <person name="Wides R."/>
            <person name="Salzberg S.L."/>
            <person name="Loftus B.J."/>
            <person name="Yandell M.D."/>
            <person name="Majoros W.H."/>
            <person name="Rusch D.B."/>
            <person name="Lai Z."/>
            <person name="Kraft C.L."/>
            <person name="Abril J.F."/>
            <person name="Anthouard V."/>
            <person name="Arensburger P."/>
            <person name="Atkinson P.W."/>
            <person name="Baden H."/>
            <person name="de Berardinis V."/>
            <person name="Baldwin D."/>
            <person name="Benes V."/>
            <person name="Biedler J."/>
            <person name="Blass C."/>
            <person name="Bolanos R."/>
            <person name="Boscus D."/>
            <person name="Barnstead M."/>
            <person name="Cai S."/>
            <person name="Center A."/>
            <person name="Chaturverdi K."/>
            <person name="Christophides G.K."/>
            <person name="Chrystal M.A.M."/>
            <person name="Clamp M."/>
            <person name="Cravchik A."/>
            <person name="Curwen V."/>
            <person name="Dana A."/>
            <person name="Delcher A."/>
            <person name="Dew I."/>
            <person name="Evans C.A."/>
            <person name="Flanigan M."/>
            <person name="Grundschober-Freimoser A."/>
            <person name="Friedli L."/>
            <person name="Gu Z."/>
            <person name="Guan P."/>
            <person name="Guigo R."/>
            <person name="Hillenmeyer M.E."/>
            <person name="Hladun S.L."/>
            <person name="Hogan J.R."/>
            <person name="Hong Y.S."/>
            <person name="Hoover J."/>
            <person name="Jaillon O."/>
            <person name="Ke Z."/>
            <person name="Kodira C.D."/>
            <person name="Kokoza E."/>
            <person name="Koutsos A."/>
            <person name="Letunic I."/>
            <person name="Levitsky A.A."/>
            <person name="Liang Y."/>
            <person name="Lin J.-J."/>
            <person name="Lobo N.F."/>
            <person name="Lopez J.R."/>
            <person name="Malek J.A."/>
            <person name="McIntosh T.C."/>
            <person name="Meister S."/>
            <person name="Miller J.R."/>
            <person name="Mobarry C."/>
            <person name="Mongin E."/>
            <person name="Murphy S.D."/>
            <person name="O'Brochta D.A."/>
            <person name="Pfannkoch C."/>
            <person name="Qi R."/>
            <person name="Regier M.A."/>
            <person name="Remington K."/>
            <person name="Shao H."/>
            <person name="Sharakhova M.V."/>
            <person name="Sitter C.D."/>
            <person name="Shetty J."/>
            <person name="Smith T.J."/>
            <person name="Strong R."/>
            <person name="Sun J."/>
            <person name="Thomasova D."/>
            <person name="Ton L.Q."/>
            <person name="Topalis P."/>
            <person name="Tu Z.J."/>
            <person name="Unger M.F."/>
            <person name="Walenz B."/>
            <person name="Wang A.H."/>
            <person name="Wang J."/>
            <person name="Wang M."/>
            <person name="Wang X."/>
            <person name="Woodford K.J."/>
            <person name="Wortman J.R."/>
            <person name="Wu M."/>
            <person name="Yao A."/>
            <person name="Zdobnov E.M."/>
            <person name="Zhang H."/>
            <person name="Zhao Q."/>
            <person name="Zhao S."/>
            <person name="Zhu S.C."/>
            <person name="Zhimulev I."/>
            <person name="Coluzzi M."/>
            <person name="della Torre A."/>
            <person name="Roth C.W."/>
            <person name="Louis C."/>
            <person name="Kalush F."/>
            <person name="Mural R.J."/>
            <person name="Myers E.W."/>
            <person name="Adams M.D."/>
            <person name="Smith H.O."/>
            <person name="Broder S."/>
            <person name="Gardner M.J."/>
            <person name="Fraser C.M."/>
            <person name="Birney E."/>
            <person name="Bork P."/>
            <person name="Brey P.T."/>
            <person name="Venter J.C."/>
            <person name="Weissenbach J."/>
            <person name="Kafatos F.C."/>
            <person name="Collins F.H."/>
            <person name="Hoffman S.L."/>
        </authorList>
    </citation>
    <scope>NUCLEOTIDE SEQUENCE [LARGE SCALE GENOMIC DNA]</scope>
    <source>
        <strain>PEST</strain>
    </source>
</reference>
<feature type="chain" id="PRO_0000288833" description="Protein prickle">
    <location>
        <begin position="1"/>
        <end position="923"/>
    </location>
</feature>
<feature type="domain" description="PET" evidence="4">
    <location>
        <begin position="275"/>
        <end position="383"/>
    </location>
</feature>
<feature type="domain" description="LIM zinc-binding 1" evidence="3">
    <location>
        <begin position="382"/>
        <end position="446"/>
    </location>
</feature>
<feature type="domain" description="LIM zinc-binding 2" evidence="3">
    <location>
        <begin position="447"/>
        <end position="507"/>
    </location>
</feature>
<feature type="domain" description="LIM zinc-binding 3" evidence="3">
    <location>
        <begin position="508"/>
        <end position="570"/>
    </location>
</feature>
<feature type="region of interest" description="Disordered" evidence="5">
    <location>
        <begin position="1"/>
        <end position="196"/>
    </location>
</feature>
<feature type="region of interest" description="Disordered" evidence="5">
    <location>
        <begin position="571"/>
        <end position="668"/>
    </location>
</feature>
<feature type="region of interest" description="Disordered" evidence="5">
    <location>
        <begin position="703"/>
        <end position="867"/>
    </location>
</feature>
<feature type="compositionally biased region" description="Low complexity" evidence="5">
    <location>
        <begin position="11"/>
        <end position="34"/>
    </location>
</feature>
<feature type="compositionally biased region" description="Basic residues" evidence="5">
    <location>
        <begin position="37"/>
        <end position="49"/>
    </location>
</feature>
<feature type="compositionally biased region" description="Low complexity" evidence="5">
    <location>
        <begin position="59"/>
        <end position="73"/>
    </location>
</feature>
<feature type="compositionally biased region" description="Low complexity" evidence="5">
    <location>
        <begin position="106"/>
        <end position="118"/>
    </location>
</feature>
<feature type="compositionally biased region" description="Gly residues" evidence="5">
    <location>
        <begin position="122"/>
        <end position="134"/>
    </location>
</feature>
<feature type="compositionally biased region" description="Low complexity" evidence="5">
    <location>
        <begin position="152"/>
        <end position="169"/>
    </location>
</feature>
<feature type="compositionally biased region" description="Low complexity" evidence="5">
    <location>
        <begin position="184"/>
        <end position="196"/>
    </location>
</feature>
<feature type="compositionally biased region" description="Gly residues" evidence="5">
    <location>
        <begin position="709"/>
        <end position="718"/>
    </location>
</feature>
<feature type="compositionally biased region" description="Polar residues" evidence="5">
    <location>
        <begin position="738"/>
        <end position="748"/>
    </location>
</feature>
<feature type="compositionally biased region" description="Basic and acidic residues" evidence="5">
    <location>
        <begin position="777"/>
        <end position="786"/>
    </location>
</feature>
<feature type="compositionally biased region" description="Polar residues" evidence="5">
    <location>
        <begin position="792"/>
        <end position="805"/>
    </location>
</feature>
<feature type="compositionally biased region" description="Acidic residues" evidence="5">
    <location>
        <begin position="817"/>
        <end position="827"/>
    </location>
</feature>
<feature type="compositionally biased region" description="Basic and acidic residues" evidence="5">
    <location>
        <begin position="840"/>
        <end position="852"/>
    </location>
</feature>
<feature type="compositionally biased region" description="Low complexity" evidence="5">
    <location>
        <begin position="853"/>
        <end position="865"/>
    </location>
</feature>
<keyword id="KW-1003">Cell membrane</keyword>
<keyword id="KW-0217">Developmental protein</keyword>
<keyword id="KW-0440">LIM domain</keyword>
<keyword id="KW-0472">Membrane</keyword>
<keyword id="KW-0479">Metal-binding</keyword>
<keyword id="KW-1185">Reference proteome</keyword>
<keyword id="KW-0677">Repeat</keyword>
<keyword id="KW-0862">Zinc</keyword>
<protein>
    <recommendedName>
        <fullName>Protein prickle</fullName>
    </recommendedName>
</protein>
<organism>
    <name type="scientific">Anopheles gambiae</name>
    <name type="common">African malaria mosquito</name>
    <dbReference type="NCBI Taxonomy" id="7165"/>
    <lineage>
        <taxon>Eukaryota</taxon>
        <taxon>Metazoa</taxon>
        <taxon>Ecdysozoa</taxon>
        <taxon>Arthropoda</taxon>
        <taxon>Hexapoda</taxon>
        <taxon>Insecta</taxon>
        <taxon>Pterygota</taxon>
        <taxon>Neoptera</taxon>
        <taxon>Endopterygota</taxon>
        <taxon>Diptera</taxon>
        <taxon>Nematocera</taxon>
        <taxon>Culicoidea</taxon>
        <taxon>Culicidae</taxon>
        <taxon>Anophelinae</taxon>
        <taxon>Anopheles</taxon>
    </lineage>
</organism>
<proteinExistence type="inferred from homology"/>
<comment type="function">
    <text evidence="2">Acts in a planar cell polarity (PCP) complex; polarization along the apical/basal axis of epithelial cells. PCP signaling in the wing disk requires the receptor fz and the cytoplasmic proteins dsh and pk. These act in a feedback loop leading to activation of the jnk cascade and subsequent polarized arrangement of hairs and bristles. Dgo and pk compete with one another for dsh binding, thereby modulating fz dsh activity and ensuring tight control over fz PCP signaling. Vang, stan and pk function together to regulate the establishment of tissue polarity in the adult eye (By similarity).</text>
</comment>
<comment type="subunit">
    <text evidence="2">Interacts with dsh; PET and LIM domains interact with dsh DEP domain, in wing cells. Interacts with Vang in photoreceptor cells (By similarity).</text>
</comment>
<comment type="subcellular location">
    <subcellularLocation>
        <location evidence="1">Cell membrane</location>
        <topology evidence="1">Peripheral membrane protein</topology>
        <orientation evidence="1">Cytoplasmic side</orientation>
    </subcellularLocation>
</comment>
<comment type="similarity">
    <text evidence="6">Belongs to the prickle / espinas / testin family.</text>
</comment>
<sequence>MSYPYQKSHHQTQQPQQNGHPQHQLMLQQQQQADHSPHHHHHHHVHHATAHAYPYELGRSPLRSPQSPPLYSGKPPPPPPQSYHSYQQPPTAAHPPVSLSGAPTSMPGMMPGQQPPGMTLSLGGGGGGGGGGSAGDCFMLPPLQPQSPDGLSTVTNTSSTATNAPSARSVYPQHHQPSYPSIGSSHHPFHSPASAAALIGPSMPQHAQQQQQHQMQPHHYSSMHLLGPAGGPPSSVGPASMVGMMGPGGHGGGGVGGGAGGIAGGVGGGPGGGMGGGHNYSQSDDDSGCALEEYTWVPPGLRPDQVHLYFSAIPEDKVPYVNSIGERHRVRQLLQQLPPHDNEVRYCHSLTDEERKELKLFSAQRKREALGRGTVKQITTTLICERCGECASSGDMMVFASRFEPNTCWHPACFACCVCKELLVDLIYFHRENRLYCGRHHAETLKPRCSACDEIILADECTEAEGRAWHIKHFACFECDKQLGGQRYIMRDGKPYCLHCFDAMFAEYCDYCSEPIGVDQGQMSHDGQHWHATDQCFACSTCRCSLLGRPFLPRRGEIYCSIACSKGEPPTPSDEYAHRSSQPSHTAARSPEPLRSPERGTGRLSPPHTEHEVQSHEAASTVGSDRDHQLRSPASNGTATDNGTGTAGGGVGDSNRHRIPHRQPLDLTDLGHSLEQHWQSERTGSETISITTATATVRTQVTGPIAGANGNGPTGGGPILTSSMPELNRCLAAAGSGESPSFSGTNSPTPMPIEDSVVANGGDDADEQNQNASDASHSIKEVRFEGDFQDSLPRTKSYCQRNGGQRNRAAKSSSYASDDDELAEDETDNYHHRRHHHSHQREQQRPVDDSDARSVCSTCSSSSSSADDDVYELPLRRTSYGGTRIHYMPNNSLACARKRKQLQTSSGVAGQHYEKDNKNCIIS</sequence>
<name>PRIC1_ANOGA</name>
<accession>Q7QJT4</accession>
<dbReference type="EMBL" id="AAAB01008807">
    <property type="protein sequence ID" value="EAA04128.4"/>
    <property type="molecule type" value="Genomic_DNA"/>
</dbReference>
<dbReference type="RefSeq" id="XP_308221.4">
    <property type="nucleotide sequence ID" value="XM_308221.4"/>
</dbReference>
<dbReference type="SMR" id="Q7QJT4"/>
<dbReference type="FunCoup" id="Q7QJT4">
    <property type="interactions" value="117"/>
</dbReference>
<dbReference type="STRING" id="7165.Q7QJT4"/>
<dbReference type="PaxDb" id="7165-AGAP007648-PA"/>
<dbReference type="VEuPathDB" id="VectorBase:AGAMI1_000372"/>
<dbReference type="VEuPathDB" id="VectorBase:AGAP007648"/>
<dbReference type="eggNOG" id="KOG1704">
    <property type="taxonomic scope" value="Eukaryota"/>
</dbReference>
<dbReference type="HOGENOM" id="CLU_008937_4_2_1"/>
<dbReference type="InParanoid" id="Q7QJT4"/>
<dbReference type="OMA" id="HRENRLY"/>
<dbReference type="PhylomeDB" id="Q7QJT4"/>
<dbReference type="Proteomes" id="UP000007062">
    <property type="component" value="Chromosome 2L"/>
</dbReference>
<dbReference type="GO" id="GO:0005886">
    <property type="term" value="C:plasma membrane"/>
    <property type="evidence" value="ECO:0000250"/>
    <property type="project" value="UniProtKB"/>
</dbReference>
<dbReference type="GO" id="GO:0008270">
    <property type="term" value="F:zinc ion binding"/>
    <property type="evidence" value="ECO:0007669"/>
    <property type="project" value="InterPro"/>
</dbReference>
<dbReference type="GO" id="GO:0009948">
    <property type="term" value="P:anterior/posterior axis specification"/>
    <property type="evidence" value="ECO:0000250"/>
    <property type="project" value="UniProtKB"/>
</dbReference>
<dbReference type="GO" id="GO:0001736">
    <property type="term" value="P:establishment of planar polarity"/>
    <property type="evidence" value="ECO:0000250"/>
    <property type="project" value="UniProtKB"/>
</dbReference>
<dbReference type="GO" id="GO:0007164">
    <property type="term" value="P:establishment of tissue polarity"/>
    <property type="evidence" value="ECO:0000250"/>
    <property type="project" value="UniProtKB"/>
</dbReference>
<dbReference type="CDD" id="cd09415">
    <property type="entry name" value="LIM1_Prickle"/>
    <property type="match status" value="1"/>
</dbReference>
<dbReference type="CDD" id="cd09418">
    <property type="entry name" value="LIM2_Prickle"/>
    <property type="match status" value="1"/>
</dbReference>
<dbReference type="CDD" id="cd09420">
    <property type="entry name" value="LIM3_Prickle"/>
    <property type="match status" value="1"/>
</dbReference>
<dbReference type="CDD" id="cd09827">
    <property type="entry name" value="PET_Prickle"/>
    <property type="match status" value="1"/>
</dbReference>
<dbReference type="FunFam" id="2.10.110.10:FF:000022">
    <property type="entry name" value="prickle-like protein 2 isoform X1"/>
    <property type="match status" value="1"/>
</dbReference>
<dbReference type="FunFam" id="2.10.110.10:FF:000035">
    <property type="entry name" value="prickle-like protein 2 isoform X1"/>
    <property type="match status" value="1"/>
</dbReference>
<dbReference type="FunFam" id="2.10.110.10:FF:000005">
    <property type="entry name" value="Testin isoform 1"/>
    <property type="match status" value="1"/>
</dbReference>
<dbReference type="Gene3D" id="2.10.110.10">
    <property type="entry name" value="Cysteine Rich Protein"/>
    <property type="match status" value="3"/>
</dbReference>
<dbReference type="InterPro" id="IPR033725">
    <property type="entry name" value="LIM1_prickle"/>
</dbReference>
<dbReference type="InterPro" id="IPR033726">
    <property type="entry name" value="LIM2_prickle"/>
</dbReference>
<dbReference type="InterPro" id="IPR033727">
    <property type="entry name" value="LIM3_prickle"/>
</dbReference>
<dbReference type="InterPro" id="IPR010442">
    <property type="entry name" value="PET_domain"/>
</dbReference>
<dbReference type="InterPro" id="IPR033723">
    <property type="entry name" value="PET_prickle"/>
</dbReference>
<dbReference type="InterPro" id="IPR047120">
    <property type="entry name" value="Pk/Esn/Tes"/>
</dbReference>
<dbReference type="InterPro" id="IPR001781">
    <property type="entry name" value="Znf_LIM"/>
</dbReference>
<dbReference type="PANTHER" id="PTHR24211">
    <property type="entry name" value="LIM DOMAIN-CONTAINING PROTEIN"/>
    <property type="match status" value="1"/>
</dbReference>
<dbReference type="PANTHER" id="PTHR24211:SF20">
    <property type="entry name" value="PROTEIN ESPINAS-RELATED"/>
    <property type="match status" value="1"/>
</dbReference>
<dbReference type="Pfam" id="PF00412">
    <property type="entry name" value="LIM"/>
    <property type="match status" value="3"/>
</dbReference>
<dbReference type="Pfam" id="PF06297">
    <property type="entry name" value="PET"/>
    <property type="match status" value="1"/>
</dbReference>
<dbReference type="SMART" id="SM00132">
    <property type="entry name" value="LIM"/>
    <property type="match status" value="3"/>
</dbReference>
<dbReference type="SUPFAM" id="SSF57716">
    <property type="entry name" value="Glucocorticoid receptor-like (DNA-binding domain)"/>
    <property type="match status" value="2"/>
</dbReference>
<dbReference type="PROSITE" id="PS00478">
    <property type="entry name" value="LIM_DOMAIN_1"/>
    <property type="match status" value="2"/>
</dbReference>
<dbReference type="PROSITE" id="PS50023">
    <property type="entry name" value="LIM_DOMAIN_2"/>
    <property type="match status" value="3"/>
</dbReference>
<dbReference type="PROSITE" id="PS51303">
    <property type="entry name" value="PET"/>
    <property type="match status" value="1"/>
</dbReference>
<gene>
    <name evidence="2" type="primary">pk</name>
    <name type="ORF">AGAP007648</name>
</gene>